<keyword id="KW-0143">Chaperone</keyword>
<keyword id="KW-0963">Cytoplasm</keyword>
<name>CH10_STAAC</name>
<proteinExistence type="inferred from homology"/>
<evidence type="ECO:0000255" key="1">
    <source>
        <dbReference type="HAMAP-Rule" id="MF_00580"/>
    </source>
</evidence>
<comment type="function">
    <text evidence="1">Together with the chaperonin GroEL, plays an essential role in assisting protein folding. The GroEL-GroES system forms a nano-cage that allows encapsulation of the non-native substrate proteins and provides a physical environment optimized to promote and accelerate protein folding. GroES binds to the apical surface of the GroEL ring, thereby capping the opening of the GroEL channel.</text>
</comment>
<comment type="subunit">
    <text evidence="1">Heptamer of 7 subunits arranged in a ring. Interacts with the chaperonin GroEL.</text>
</comment>
<comment type="subcellular location">
    <subcellularLocation>
        <location evidence="1">Cytoplasm</location>
    </subcellularLocation>
</comment>
<comment type="similarity">
    <text evidence="1">Belongs to the GroES chaperonin family.</text>
</comment>
<protein>
    <recommendedName>
        <fullName evidence="1">Co-chaperonin GroES</fullName>
    </recommendedName>
    <alternativeName>
        <fullName evidence="1">10 kDa chaperonin</fullName>
    </alternativeName>
    <alternativeName>
        <fullName evidence="1">Chaperonin-10</fullName>
        <shortName evidence="1">Cpn10</shortName>
    </alternativeName>
</protein>
<sequence length="94" mass="10416">MLKPIGNRVIIEKKEQEQTTKSGIVLTDSAKEKSNEGVIVAVGTGRLLNDGTRVTPEVKEGDRVVFQQYAGTEVKRDNETYLVLNEEDILAVIE</sequence>
<gene>
    <name evidence="1" type="primary">groES</name>
    <name evidence="1" type="synonym">groS</name>
    <name type="ordered locus">SACOL2017</name>
</gene>
<dbReference type="EMBL" id="CP000046">
    <property type="protein sequence ID" value="AAW36982.1"/>
    <property type="molecule type" value="Genomic_DNA"/>
</dbReference>
<dbReference type="RefSeq" id="WP_000917289.1">
    <property type="nucleotide sequence ID" value="NZ_JBGOFO010000006.1"/>
</dbReference>
<dbReference type="SMR" id="Q5HEH1"/>
<dbReference type="GeneID" id="98346332"/>
<dbReference type="KEGG" id="sac:SACOL2017"/>
<dbReference type="HOGENOM" id="CLU_132825_2_1_9"/>
<dbReference type="Proteomes" id="UP000000530">
    <property type="component" value="Chromosome"/>
</dbReference>
<dbReference type="GO" id="GO:0005737">
    <property type="term" value="C:cytoplasm"/>
    <property type="evidence" value="ECO:0007669"/>
    <property type="project" value="UniProtKB-SubCell"/>
</dbReference>
<dbReference type="GO" id="GO:0005524">
    <property type="term" value="F:ATP binding"/>
    <property type="evidence" value="ECO:0007669"/>
    <property type="project" value="InterPro"/>
</dbReference>
<dbReference type="GO" id="GO:0046872">
    <property type="term" value="F:metal ion binding"/>
    <property type="evidence" value="ECO:0007669"/>
    <property type="project" value="TreeGrafter"/>
</dbReference>
<dbReference type="GO" id="GO:0044183">
    <property type="term" value="F:protein folding chaperone"/>
    <property type="evidence" value="ECO:0007669"/>
    <property type="project" value="InterPro"/>
</dbReference>
<dbReference type="GO" id="GO:0051087">
    <property type="term" value="F:protein-folding chaperone binding"/>
    <property type="evidence" value="ECO:0007669"/>
    <property type="project" value="TreeGrafter"/>
</dbReference>
<dbReference type="GO" id="GO:0051082">
    <property type="term" value="F:unfolded protein binding"/>
    <property type="evidence" value="ECO:0007669"/>
    <property type="project" value="TreeGrafter"/>
</dbReference>
<dbReference type="GO" id="GO:0051085">
    <property type="term" value="P:chaperone cofactor-dependent protein refolding"/>
    <property type="evidence" value="ECO:0007669"/>
    <property type="project" value="TreeGrafter"/>
</dbReference>
<dbReference type="CDD" id="cd00320">
    <property type="entry name" value="cpn10"/>
    <property type="match status" value="1"/>
</dbReference>
<dbReference type="FunFam" id="2.30.33.40:FF:000001">
    <property type="entry name" value="10 kDa chaperonin"/>
    <property type="match status" value="1"/>
</dbReference>
<dbReference type="Gene3D" id="2.30.33.40">
    <property type="entry name" value="GroES chaperonin"/>
    <property type="match status" value="1"/>
</dbReference>
<dbReference type="HAMAP" id="MF_00580">
    <property type="entry name" value="CH10"/>
    <property type="match status" value="1"/>
</dbReference>
<dbReference type="InterPro" id="IPR020818">
    <property type="entry name" value="Chaperonin_GroES"/>
</dbReference>
<dbReference type="InterPro" id="IPR037124">
    <property type="entry name" value="Chaperonin_GroES_sf"/>
</dbReference>
<dbReference type="InterPro" id="IPR018369">
    <property type="entry name" value="Chaprnonin_Cpn10_CS"/>
</dbReference>
<dbReference type="InterPro" id="IPR011032">
    <property type="entry name" value="GroES-like_sf"/>
</dbReference>
<dbReference type="NCBIfam" id="NF001531">
    <property type="entry name" value="PRK00364.2-2"/>
    <property type="match status" value="1"/>
</dbReference>
<dbReference type="NCBIfam" id="NF001532">
    <property type="entry name" value="PRK00364.2-3"/>
    <property type="match status" value="1"/>
</dbReference>
<dbReference type="NCBIfam" id="NF001533">
    <property type="entry name" value="PRK00364.2-4"/>
    <property type="match status" value="1"/>
</dbReference>
<dbReference type="NCBIfam" id="NF001534">
    <property type="entry name" value="PRK00364.2-5"/>
    <property type="match status" value="1"/>
</dbReference>
<dbReference type="PANTHER" id="PTHR10772">
    <property type="entry name" value="10 KDA HEAT SHOCK PROTEIN"/>
    <property type="match status" value="1"/>
</dbReference>
<dbReference type="PANTHER" id="PTHR10772:SF58">
    <property type="entry name" value="CO-CHAPERONIN GROES"/>
    <property type="match status" value="1"/>
</dbReference>
<dbReference type="Pfam" id="PF00166">
    <property type="entry name" value="Cpn10"/>
    <property type="match status" value="1"/>
</dbReference>
<dbReference type="PRINTS" id="PR00297">
    <property type="entry name" value="CHAPERONIN10"/>
</dbReference>
<dbReference type="SMART" id="SM00883">
    <property type="entry name" value="Cpn10"/>
    <property type="match status" value="1"/>
</dbReference>
<dbReference type="SUPFAM" id="SSF50129">
    <property type="entry name" value="GroES-like"/>
    <property type="match status" value="1"/>
</dbReference>
<dbReference type="PROSITE" id="PS00681">
    <property type="entry name" value="CHAPERONINS_CPN10"/>
    <property type="match status" value="1"/>
</dbReference>
<accession>Q5HEH1</accession>
<reference key="1">
    <citation type="journal article" date="2005" name="J. Bacteriol.">
        <title>Insights on evolution of virulence and resistance from the complete genome analysis of an early methicillin-resistant Staphylococcus aureus strain and a biofilm-producing methicillin-resistant Staphylococcus epidermidis strain.</title>
        <authorList>
            <person name="Gill S.R."/>
            <person name="Fouts D.E."/>
            <person name="Archer G.L."/>
            <person name="Mongodin E.F."/>
            <person name="DeBoy R.T."/>
            <person name="Ravel J."/>
            <person name="Paulsen I.T."/>
            <person name="Kolonay J.F."/>
            <person name="Brinkac L.M."/>
            <person name="Beanan M.J."/>
            <person name="Dodson R.J."/>
            <person name="Daugherty S.C."/>
            <person name="Madupu R."/>
            <person name="Angiuoli S.V."/>
            <person name="Durkin A.S."/>
            <person name="Haft D.H."/>
            <person name="Vamathevan J.J."/>
            <person name="Khouri H."/>
            <person name="Utterback T.R."/>
            <person name="Lee C."/>
            <person name="Dimitrov G."/>
            <person name="Jiang L."/>
            <person name="Qin H."/>
            <person name="Weidman J."/>
            <person name="Tran K."/>
            <person name="Kang K.H."/>
            <person name="Hance I.R."/>
            <person name="Nelson K.E."/>
            <person name="Fraser C.M."/>
        </authorList>
    </citation>
    <scope>NUCLEOTIDE SEQUENCE [LARGE SCALE GENOMIC DNA]</scope>
    <source>
        <strain>COL</strain>
    </source>
</reference>
<organism>
    <name type="scientific">Staphylococcus aureus (strain COL)</name>
    <dbReference type="NCBI Taxonomy" id="93062"/>
    <lineage>
        <taxon>Bacteria</taxon>
        <taxon>Bacillati</taxon>
        <taxon>Bacillota</taxon>
        <taxon>Bacilli</taxon>
        <taxon>Bacillales</taxon>
        <taxon>Staphylococcaceae</taxon>
        <taxon>Staphylococcus</taxon>
    </lineage>
</organism>
<feature type="chain" id="PRO_0000174839" description="Co-chaperonin GroES">
    <location>
        <begin position="1"/>
        <end position="94"/>
    </location>
</feature>